<protein>
    <recommendedName>
        <fullName>Na(+)/H(+) antiporter subunit A1</fullName>
    </recommendedName>
    <alternativeName>
        <fullName>Mnh complex subunit A1</fullName>
    </alternativeName>
    <alternativeName>
        <fullName>Mrp complex subunit A1</fullName>
    </alternativeName>
</protein>
<accession>Q9ZNG6</accession>
<accession>Q0Q2K7</accession>
<reference key="1">
    <citation type="journal article" date="1998" name="J. Bacteriol.">
        <title>A putative multisubunit Na+/H+ antiporter from Staphylococcus aureus.</title>
        <authorList>
            <person name="Hiramatsu T."/>
            <person name="Kodama K."/>
            <person name="Kuroda T."/>
            <person name="Mizushima T."/>
            <person name="Tsuchiya T."/>
        </authorList>
    </citation>
    <scope>NUCLEOTIDE SEQUENCE [GENOMIC DNA]</scope>
    <scope>CHARACTERIZATION OF ANTIPORTER ACTIVITY</scope>
    <source>
        <strain>ATCC 21027 / 209-P</strain>
    </source>
</reference>
<reference key="2">
    <citation type="journal article" date="2007" name="J. Bacteriol.">
        <title>Catalytic properties of Staphylococcus aureus and Bacillus members of the secondary cation/proton antiporter-3 (Mrp) family are revealed by an optimized assay in an Escherichia coli host.</title>
        <authorList>
            <person name="Swartz T.H."/>
            <person name="Ito M."/>
            <person name="Ohira T."/>
            <person name="Natsui S."/>
            <person name="Hicks D.B."/>
            <person name="Krulwich T.A."/>
        </authorList>
    </citation>
    <scope>NUCLEOTIDE SEQUENCE [GENOMIC DNA] OF 12-801</scope>
    <scope>CHARACTERIZATION</scope>
    <scope>PROBABLE ELECTROGENIC ANTIPORTER ACTIVITY</scope>
    <source>
        <strain>RF4220</strain>
    </source>
</reference>
<organism>
    <name type="scientific">Staphylococcus aureus</name>
    <dbReference type="NCBI Taxonomy" id="1280"/>
    <lineage>
        <taxon>Bacteria</taxon>
        <taxon>Bacillati</taxon>
        <taxon>Bacillota</taxon>
        <taxon>Bacilli</taxon>
        <taxon>Bacillales</taxon>
        <taxon>Staphylococcaceae</taxon>
        <taxon>Staphylococcus</taxon>
    </lineage>
</organism>
<evidence type="ECO:0000255" key="1"/>
<evidence type="ECO:0000305" key="2"/>
<gene>
    <name type="primary">mnhA1</name>
    <name type="synonym">mrpA1</name>
</gene>
<proteinExistence type="evidence at protein level"/>
<feature type="chain" id="PRO_0000217071" description="Na(+)/H(+) antiporter subunit A1">
    <location>
        <begin position="1"/>
        <end position="801"/>
    </location>
</feature>
<feature type="transmembrane region" description="Helical" evidence="1">
    <location>
        <begin position="4"/>
        <end position="25"/>
    </location>
</feature>
<feature type="transmembrane region" description="Helical" evidence="1">
    <location>
        <begin position="30"/>
        <end position="49"/>
    </location>
</feature>
<feature type="transmembrane region" description="Helical" evidence="1">
    <location>
        <begin position="79"/>
        <end position="101"/>
    </location>
</feature>
<feature type="transmembrane region" description="Helical" evidence="1">
    <location>
        <begin position="108"/>
        <end position="127"/>
    </location>
</feature>
<feature type="transmembrane region" description="Helical" evidence="1">
    <location>
        <begin position="131"/>
        <end position="153"/>
    </location>
</feature>
<feature type="transmembrane region" description="Helical" evidence="1">
    <location>
        <begin position="166"/>
        <end position="188"/>
    </location>
</feature>
<feature type="transmembrane region" description="Helical" evidence="1">
    <location>
        <begin position="208"/>
        <end position="230"/>
    </location>
</feature>
<feature type="transmembrane region" description="Helical" evidence="1">
    <location>
        <begin position="243"/>
        <end position="265"/>
    </location>
</feature>
<feature type="transmembrane region" description="Helical" evidence="1">
    <location>
        <begin position="270"/>
        <end position="289"/>
    </location>
</feature>
<feature type="transmembrane region" description="Helical" evidence="1">
    <location>
        <begin position="302"/>
        <end position="324"/>
    </location>
</feature>
<feature type="transmembrane region" description="Helical" evidence="1">
    <location>
        <begin position="339"/>
        <end position="361"/>
    </location>
</feature>
<feature type="transmembrane region" description="Helical" evidence="1">
    <location>
        <begin position="373"/>
        <end position="395"/>
    </location>
</feature>
<feature type="transmembrane region" description="Helical" evidence="1">
    <location>
        <begin position="429"/>
        <end position="451"/>
    </location>
</feature>
<feature type="transmembrane region" description="Helical" evidence="1">
    <location>
        <begin position="472"/>
        <end position="494"/>
    </location>
</feature>
<feature type="transmembrane region" description="Helical" evidence="1">
    <location>
        <begin position="526"/>
        <end position="548"/>
    </location>
</feature>
<feature type="transmembrane region" description="Helical" evidence="1">
    <location>
        <begin position="589"/>
        <end position="611"/>
    </location>
</feature>
<feature type="transmembrane region" description="Helical" evidence="1">
    <location>
        <begin position="621"/>
        <end position="641"/>
    </location>
</feature>
<feature type="transmembrane region" description="Helical" evidence="1">
    <location>
        <begin position="646"/>
        <end position="668"/>
    </location>
</feature>
<feature type="transmembrane region" description="Helical" evidence="1">
    <location>
        <begin position="672"/>
        <end position="694"/>
    </location>
</feature>
<feature type="transmembrane region" description="Helical" evidence="1">
    <location>
        <begin position="707"/>
        <end position="729"/>
    </location>
</feature>
<feature type="transmembrane region" description="Helical" evidence="1">
    <location>
        <begin position="767"/>
        <end position="784"/>
    </location>
</feature>
<keyword id="KW-0050">Antiport</keyword>
<keyword id="KW-1003">Cell membrane</keyword>
<keyword id="KW-0375">Hydrogen ion transport</keyword>
<keyword id="KW-0406">Ion transport</keyword>
<keyword id="KW-0472">Membrane</keyword>
<keyword id="KW-0915">Sodium</keyword>
<keyword id="KW-0739">Sodium transport</keyword>
<keyword id="KW-0812">Transmembrane</keyword>
<keyword id="KW-1133">Transmembrane helix</keyword>
<keyword id="KW-0813">Transport</keyword>
<dbReference type="EMBL" id="AB015981">
    <property type="protein sequence ID" value="BAA35095.1"/>
    <property type="molecule type" value="Genomic_DNA"/>
</dbReference>
<dbReference type="EMBL" id="DQ659238">
    <property type="protein sequence ID" value="ABG67110.1"/>
    <property type="molecule type" value="Genomic_DNA"/>
</dbReference>
<dbReference type="RefSeq" id="WP_042727539.1">
    <property type="nucleotide sequence ID" value="NZ_AP014942.1"/>
</dbReference>
<dbReference type="SMR" id="Q9ZNG6"/>
<dbReference type="TCDB" id="2.A.63.1.3">
    <property type="family name" value="the monovalent cation (k(+) or na(+)):proton antiporter-3 (cpa3) family"/>
</dbReference>
<dbReference type="PATRIC" id="fig|1280.3363.peg.306"/>
<dbReference type="GO" id="GO:0005886">
    <property type="term" value="C:plasma membrane"/>
    <property type="evidence" value="ECO:0007669"/>
    <property type="project" value="UniProtKB-SubCell"/>
</dbReference>
<dbReference type="GO" id="GO:0015297">
    <property type="term" value="F:antiporter activity"/>
    <property type="evidence" value="ECO:0007669"/>
    <property type="project" value="UniProtKB-KW"/>
</dbReference>
<dbReference type="GO" id="GO:1902600">
    <property type="term" value="P:proton transmembrane transport"/>
    <property type="evidence" value="ECO:0007669"/>
    <property type="project" value="UniProtKB-KW"/>
</dbReference>
<dbReference type="GO" id="GO:0006814">
    <property type="term" value="P:sodium ion transport"/>
    <property type="evidence" value="ECO:0007669"/>
    <property type="project" value="UniProtKB-KW"/>
</dbReference>
<dbReference type="InterPro" id="IPR050616">
    <property type="entry name" value="CPA3_Na-H_Antiporter_A"/>
</dbReference>
<dbReference type="InterPro" id="IPR005663">
    <property type="entry name" value="MrpA/MnhA1/PhaAB"/>
</dbReference>
<dbReference type="InterPro" id="IPR025383">
    <property type="entry name" value="MrpA_C/MbhD"/>
</dbReference>
<dbReference type="InterPro" id="IPR046806">
    <property type="entry name" value="MrpA_C/MbhE"/>
</dbReference>
<dbReference type="InterPro" id="IPR001750">
    <property type="entry name" value="ND/Mrp_TM"/>
</dbReference>
<dbReference type="InterPro" id="IPR001516">
    <property type="entry name" value="Proton_antipo_N"/>
</dbReference>
<dbReference type="NCBIfam" id="TIGR00940">
    <property type="entry name" value="2a6301s01"/>
    <property type="match status" value="1"/>
</dbReference>
<dbReference type="NCBIfam" id="NF009285">
    <property type="entry name" value="PRK12645.1"/>
    <property type="match status" value="1"/>
</dbReference>
<dbReference type="PANTHER" id="PTHR43373">
    <property type="entry name" value="NA(+)/H(+) ANTIPORTER SUBUNIT"/>
    <property type="match status" value="1"/>
</dbReference>
<dbReference type="PANTHER" id="PTHR43373:SF1">
    <property type="entry name" value="NA(+)_H(+) ANTIPORTER SUBUNIT A"/>
    <property type="match status" value="1"/>
</dbReference>
<dbReference type="Pfam" id="PF13244">
    <property type="entry name" value="MbhD"/>
    <property type="match status" value="1"/>
</dbReference>
<dbReference type="Pfam" id="PF20501">
    <property type="entry name" value="MbhE"/>
    <property type="match status" value="1"/>
</dbReference>
<dbReference type="Pfam" id="PF00361">
    <property type="entry name" value="Proton_antipo_M"/>
    <property type="match status" value="1"/>
</dbReference>
<dbReference type="Pfam" id="PF00662">
    <property type="entry name" value="Proton_antipo_N"/>
    <property type="match status" value="1"/>
</dbReference>
<dbReference type="PRINTS" id="PR01434">
    <property type="entry name" value="NADHDHGNASE5"/>
</dbReference>
<dbReference type="PRINTS" id="PR01435">
    <property type="entry name" value="NPOXDRDTASE5"/>
</dbReference>
<sequence length="801" mass="89386">MSLLHIAVILPLIFALIIPILYRFFKRIHLGWFVLSVPIVIFIYMLTLIKTTMSGNTVMKTLNWMPHFGMNFDLYLDGLGLLFSLLISGIGSLVVLYSIGYLSKSEQLGNFYCYLLLFMGAMLGVVLSDNVIILYLFWELTSFSSFLLISFWRERQASIYGAQKSLIITVFGGLSLLGGIILLAIPTQSFSIQYMIQHASEIQNSPFFIFAMILIMIGAFTKSAQFPFYIWLPDAMEAPTPVSAYLHSATMVKAGLYLIARMTPIFAASQGWVWTVTLVGLITLFWASLNATKQQDLKGILAFSTVSQLGMIMAMLGIGAISYHYQGDDSKIYAAAFTAAIFHLINHATFKGALFMITGAVDHSTGTRDVKKLGGLLTIMPISFTITVITALSMAGVPPFNGFLSKESFLETTFTASQANLFSVDTLGYLFPIIGIVGSVFTFVYSIKFIMHIFFGQYKPEQLPKKAHEVSILMLLSPAILATLVIVFGLFPGILTNSIIEPATSSINHTVIDDVEFHMFHGLTPAFLSTLVIYILGILLIVTFSYWVKLLQRQPGKLTFNYWYNRSANVIPNYSEKMTNSYVTDYSRNNLVIIFGALILLTFVTIFSVPFNINFKDVSPIRIFEVCIVILLLSAAFLILFAKSRLFSIIMLSAVGYAVSVLFIFFKAPDLALTQFVVESISTALFLLCFYHLPNLNRYNEKRSFQLTNALIAGGVGLSVIIIGLIAYGNRHFESISKFYQEHVYDLAHGKNMVNVILVDFRGMDTLFESSVLGIAGLAVYTMIKLRKKRQTQGNEVKNHE</sequence>
<comment type="function">
    <text>Mnh complex is a Na(+)Li(+)/H(+) antiporter involved in Na(+) and/or Li(+) excretion. Na(+)/H(+) antiport consumes a transmembrane electrical potential, and is thus inferred to be electrogenic. Does not transport K(+), Ca(2+) or Mg(2+).</text>
</comment>
<comment type="activity regulation">
    <text>Na(+) extrusion is completely inhibited by the H(+) conductor carbonyl cyanide m-chlorophenylhydrazone (CCCP).</text>
</comment>
<comment type="subunit">
    <text>May form a heterooligomeric complex that consists of seven subunits: mnhA1, mnhB1, mnhC1, mnhD1, mnhE1, mnhF1 and mnhG1.</text>
</comment>
<comment type="subcellular location">
    <subcellularLocation>
        <location evidence="2">Cell membrane</location>
        <topology evidence="2">Multi-pass membrane protein</topology>
    </subcellularLocation>
</comment>
<comment type="similarity">
    <text evidence="2">Belongs to the CPA3 antiporters (TC 2.A.63) subunit A family.</text>
</comment>
<name>MNHA1_STAAU</name>